<evidence type="ECO:0000250" key="1">
    <source>
        <dbReference type="UniProtKB" id="Q93UV0"/>
    </source>
</evidence>
<evidence type="ECO:0000269" key="2">
    <source>
    </source>
</evidence>
<evidence type="ECO:0000303" key="3">
    <source>
    </source>
</evidence>
<evidence type="ECO:0000305" key="4"/>
<evidence type="ECO:0000305" key="5">
    <source>
    </source>
</evidence>
<evidence type="ECO:0000312" key="6">
    <source>
        <dbReference type="EMBL" id="ACU93375.1"/>
    </source>
</evidence>
<reference evidence="6" key="1">
    <citation type="journal article" date="2009" name="Stand. Genomic Sci.">
        <title>Complete genome sequence of Capnocytophaga ochracea type strain (VPI 2845).</title>
        <authorList>
            <person name="Mavrommatis K."/>
            <person name="Gronow S."/>
            <person name="Saunders E."/>
            <person name="Land M."/>
            <person name="Lapidus A."/>
            <person name="Copeland A."/>
            <person name="Glavina Del Rio T."/>
            <person name="Nolan M."/>
            <person name="Lucas S."/>
            <person name="Chen F."/>
            <person name="Tice H."/>
            <person name="Cheng J.F."/>
            <person name="Bruce D."/>
            <person name="Goodwin L."/>
            <person name="Pitluck S."/>
            <person name="Pati A."/>
            <person name="Ivanova N."/>
            <person name="Chen A."/>
            <person name="Palaniappan K."/>
            <person name="Chain P."/>
            <person name="Hauser L."/>
            <person name="Chang Y.J."/>
            <person name="Jeffries C.D."/>
            <person name="Brettin T."/>
            <person name="Detter J.C."/>
            <person name="Han C."/>
            <person name="Bristow J."/>
            <person name="Goker M."/>
            <person name="Rohde M."/>
            <person name="Eisen J.A."/>
            <person name="Markowitz V."/>
            <person name="Kyrpides N.C."/>
            <person name="Klenk H.P."/>
            <person name="Hugenholtz P."/>
        </authorList>
    </citation>
    <scope>NUCLEOTIDE SEQUENCE [LARGE SCALE GENOMIC DNA]</scope>
    <source>
        <strain>ATCC 27872 / DSM 7271 / CCUG 9716 / JCM 12966 / NCTC 12371 / SS31 / VPI 2845</strain>
    </source>
</reference>
<reference key="2">
    <citation type="journal article" date="2022" name="Biochemistry">
        <title>Identification and Characterization of the Biosynthetic Pathway of the Sulfonolipid Capnine.</title>
        <authorList>
            <person name="Liu Y."/>
            <person name="Wei Y."/>
            <person name="Teh T.M."/>
            <person name="Liu D."/>
            <person name="Zhou Y."/>
            <person name="Zhao S."/>
            <person name="Ang E.L."/>
            <person name="Zhao H."/>
            <person name="Zhang Y."/>
        </authorList>
    </citation>
    <scope>FUNCTION</scope>
    <scope>CATALYTIC ACTIVITY</scope>
    <scope>COFACTOR</scope>
</reference>
<keyword id="KW-0012">Acyltransferase</keyword>
<keyword id="KW-0444">Lipid biosynthesis</keyword>
<keyword id="KW-0443">Lipid metabolism</keyword>
<keyword id="KW-0663">Pyridoxal phosphate</keyword>
<keyword id="KW-1185">Reference proteome</keyword>
<keyword id="KW-0808">Transferase</keyword>
<protein>
    <recommendedName>
        <fullName evidence="3">Cysteate-C-fatty acyltransferase</fullName>
        <ecNumber evidence="2">2.3.1.-</ecNumber>
    </recommendedName>
</protein>
<comment type="function">
    <text evidence="2">Transferase involved in the biosynthesis of capnine, a sulfonolipid present in the outer membrane of gliding Bacteroidetes and essential for gliding motility (PubMed:35414181). Catalyzes the formation of 3-dehydrocapnine from cysteate and isopentadecanoyl-CoA (13-methyl-myristoyl-CoA) (PubMed:35414181). In vitro, products are also detected when 13-methyl-myristic acid is substituted with tridecylic acid, myristic acid, pentadecanoic acid or palmitic acid (PubMed:35414181).</text>
</comment>
<comment type="catalytic activity">
    <reaction evidence="2">
        <text>isopentadecanoyl-CoA + L-cysteate + H(+) = 3-oxocapnine + CO2 + CoA</text>
        <dbReference type="Rhea" id="RHEA:81571"/>
        <dbReference type="ChEBI" id="CHEBI:15378"/>
        <dbReference type="ChEBI" id="CHEBI:16526"/>
        <dbReference type="ChEBI" id="CHEBI:57287"/>
        <dbReference type="ChEBI" id="CHEBI:58090"/>
        <dbReference type="ChEBI" id="CHEBI:70827"/>
        <dbReference type="ChEBI" id="CHEBI:231947"/>
    </reaction>
    <physiologicalReaction direction="left-to-right" evidence="2">
        <dbReference type="Rhea" id="RHEA:81572"/>
    </physiologicalReaction>
</comment>
<comment type="cofactor">
    <cofactor evidence="2">
        <name>pyridoxal 5'-phosphate</name>
        <dbReference type="ChEBI" id="CHEBI:597326"/>
    </cofactor>
</comment>
<comment type="pathway">
    <text evidence="5">Lipid metabolism.</text>
</comment>
<comment type="similarity">
    <text evidence="4">Belongs to the class-II pyridoxal-phosphate-dependent aminotransferase family.</text>
</comment>
<proteinExistence type="evidence at protein level"/>
<gene>
    <name evidence="3" type="primary">capB</name>
    <name evidence="6" type="ordered locus">Coch_1830</name>
</gene>
<accession>C7M8J6</accession>
<dbReference type="EC" id="2.3.1.-" evidence="2"/>
<dbReference type="EMBL" id="CP001632">
    <property type="protein sequence ID" value="ACU93375.1"/>
    <property type="molecule type" value="Genomic_DNA"/>
</dbReference>
<dbReference type="RefSeq" id="WP_015782868.1">
    <property type="nucleotide sequence ID" value="NC_013162.1"/>
</dbReference>
<dbReference type="STRING" id="521097.Coch_1830"/>
<dbReference type="GeneID" id="29675128"/>
<dbReference type="KEGG" id="coc:Coch_1830"/>
<dbReference type="eggNOG" id="COG0156">
    <property type="taxonomic scope" value="Bacteria"/>
</dbReference>
<dbReference type="HOGENOM" id="CLU_015846_11_3_10"/>
<dbReference type="Proteomes" id="UP000006650">
    <property type="component" value="Chromosome"/>
</dbReference>
<dbReference type="GO" id="GO:0008890">
    <property type="term" value="F:glycine C-acetyltransferase activity"/>
    <property type="evidence" value="ECO:0007669"/>
    <property type="project" value="UniProtKB-EC"/>
</dbReference>
<dbReference type="GO" id="GO:0030170">
    <property type="term" value="F:pyridoxal phosphate binding"/>
    <property type="evidence" value="ECO:0007669"/>
    <property type="project" value="InterPro"/>
</dbReference>
<dbReference type="GO" id="GO:0009058">
    <property type="term" value="P:biosynthetic process"/>
    <property type="evidence" value="ECO:0007669"/>
    <property type="project" value="InterPro"/>
</dbReference>
<dbReference type="Gene3D" id="3.90.1150.10">
    <property type="entry name" value="Aspartate Aminotransferase, domain 1"/>
    <property type="match status" value="1"/>
</dbReference>
<dbReference type="Gene3D" id="3.40.640.10">
    <property type="entry name" value="Type I PLP-dependent aspartate aminotransferase-like (Major domain)"/>
    <property type="match status" value="1"/>
</dbReference>
<dbReference type="InterPro" id="IPR001917">
    <property type="entry name" value="Aminotrans_II_pyridoxalP_BS"/>
</dbReference>
<dbReference type="InterPro" id="IPR004839">
    <property type="entry name" value="Aminotransferase_I/II_large"/>
</dbReference>
<dbReference type="InterPro" id="IPR050087">
    <property type="entry name" value="AON_synthase_class-II"/>
</dbReference>
<dbReference type="InterPro" id="IPR015424">
    <property type="entry name" value="PyrdxlP-dep_Trfase"/>
</dbReference>
<dbReference type="InterPro" id="IPR015421">
    <property type="entry name" value="PyrdxlP-dep_Trfase_major"/>
</dbReference>
<dbReference type="InterPro" id="IPR015422">
    <property type="entry name" value="PyrdxlP-dep_Trfase_small"/>
</dbReference>
<dbReference type="PANTHER" id="PTHR13693">
    <property type="entry name" value="CLASS II AMINOTRANSFERASE/8-AMINO-7-OXONONANOATE SYNTHASE"/>
    <property type="match status" value="1"/>
</dbReference>
<dbReference type="Pfam" id="PF00155">
    <property type="entry name" value="Aminotran_1_2"/>
    <property type="match status" value="1"/>
</dbReference>
<dbReference type="SUPFAM" id="SSF53383">
    <property type="entry name" value="PLP-dependent transferases"/>
    <property type="match status" value="1"/>
</dbReference>
<dbReference type="PROSITE" id="PS00599">
    <property type="entry name" value="AA_TRANSFER_CLASS_2"/>
    <property type="match status" value="1"/>
</dbReference>
<feature type="chain" id="PRO_0000462146" description="Cysteate-C-fatty acyltransferase">
    <location>
        <begin position="1"/>
        <end position="420"/>
    </location>
</feature>
<feature type="binding site" evidence="1">
    <location>
        <begin position="114"/>
        <end position="115"/>
    </location>
    <ligand>
        <name>pyridoxal 5'-phosphate</name>
        <dbReference type="ChEBI" id="CHEBI:597326"/>
    </ligand>
</feature>
<feature type="binding site" evidence="1">
    <location>
        <position position="219"/>
    </location>
    <ligand>
        <name>pyridoxal 5'-phosphate</name>
        <dbReference type="ChEBI" id="CHEBI:597326"/>
    </ligand>
</feature>
<feature type="binding site" evidence="1">
    <location>
        <position position="247"/>
    </location>
    <ligand>
        <name>pyridoxal 5'-phosphate</name>
        <dbReference type="ChEBI" id="CHEBI:597326"/>
    </ligand>
</feature>
<feature type="binding site" evidence="1">
    <location>
        <position position="249"/>
    </location>
    <ligand>
        <name>pyridoxal 5'-phosphate</name>
        <dbReference type="ChEBI" id="CHEBI:597326"/>
    </ligand>
</feature>
<feature type="modified residue" description="N6-(pyridoxal phosphate)lysine" evidence="1">
    <location>
        <position position="250"/>
    </location>
</feature>
<organism>
    <name type="scientific">Capnocytophaga ochracea (strain ATCC 27872 / DSM 7271 / CCUG 9716 / JCM 12966 / NCTC 12371 / SS31 / VPI 2845)</name>
    <name type="common">Bacteroides ochraceus</name>
    <dbReference type="NCBI Taxonomy" id="521097"/>
    <lineage>
        <taxon>Bacteria</taxon>
        <taxon>Pseudomonadati</taxon>
        <taxon>Bacteroidota</taxon>
        <taxon>Flavobacteriia</taxon>
        <taxon>Flavobacteriales</taxon>
        <taxon>Flavobacteriaceae</taxon>
        <taxon>Capnocytophaga</taxon>
    </lineage>
</organism>
<name>CAPB_CAPOD</name>
<sequence>MKDLFEHIYANKGSIGRWSDHAEGYYVFPKLEGELGPHMKFQGKEILNWSINDYLGLANHPEVRKVDAEAAAEYGAAYPMGARMMSGHTTMHEELEKRLAKFVHKEASYLLNFGYQGMVSIIDALVTKNDVIVYDVDAHACIIDGVRLHFGKRYTYQHNDMESFEKNLERAAKLAETTGGGILVISEGVFGMRGEQGKLKEIVALKKKYPFRLLVDDAHGFGTLGPRGEGTGVHQGVQDEIDVYFSTFAKSMAGIGAFVAGNAKVVDYLKYNLRSQMFAKSLPMIYVKGALKRLEMMETMPELQQKLWDNVNRLQNGLKERGFNIGNTNTCVTPVFLHGSIPEAMAMVNDLREHYGIFLSIVVYPVIPKGMILLRIIPTASHSKEDIDRTLEAFSAIREKLETGVYRAINAELTKEMGDM</sequence>